<name>MON2_HUMAN</name>
<keyword id="KW-0007">Acetylation</keyword>
<keyword id="KW-0025">Alternative splicing</keyword>
<keyword id="KW-0967">Endosome</keyword>
<keyword id="KW-0472">Membrane</keyword>
<keyword id="KW-0597">Phosphoprotein</keyword>
<keyword id="KW-0653">Protein transport</keyword>
<keyword id="KW-1267">Proteomics identification</keyword>
<keyword id="KW-1185">Reference proteome</keyword>
<keyword id="KW-0813">Transport</keyword>
<organism>
    <name type="scientific">Homo sapiens</name>
    <name type="common">Human</name>
    <dbReference type="NCBI Taxonomy" id="9606"/>
    <lineage>
        <taxon>Eukaryota</taxon>
        <taxon>Metazoa</taxon>
        <taxon>Chordata</taxon>
        <taxon>Craniata</taxon>
        <taxon>Vertebrata</taxon>
        <taxon>Euteleostomi</taxon>
        <taxon>Mammalia</taxon>
        <taxon>Eutheria</taxon>
        <taxon>Euarchontoglires</taxon>
        <taxon>Primates</taxon>
        <taxon>Haplorrhini</taxon>
        <taxon>Catarrhini</taxon>
        <taxon>Hominidae</taxon>
        <taxon>Homo</taxon>
    </lineage>
</organism>
<evidence type="ECO:0000250" key="1">
    <source>
        <dbReference type="UniProtKB" id="Q80TL7"/>
    </source>
</evidence>
<evidence type="ECO:0000256" key="2">
    <source>
        <dbReference type="SAM" id="MobiDB-lite"/>
    </source>
</evidence>
<evidence type="ECO:0000269" key="3">
    <source>
    </source>
</evidence>
<evidence type="ECO:0000269" key="4">
    <source>
    </source>
</evidence>
<evidence type="ECO:0000269" key="5">
    <source ref="1"/>
</evidence>
<evidence type="ECO:0000303" key="6">
    <source>
    </source>
</evidence>
<evidence type="ECO:0000303" key="7">
    <source>
    </source>
</evidence>
<evidence type="ECO:0000303" key="8">
    <source>
    </source>
</evidence>
<evidence type="ECO:0000303" key="9">
    <source>
    </source>
</evidence>
<evidence type="ECO:0000305" key="10"/>
<evidence type="ECO:0000312" key="11">
    <source>
        <dbReference type="HGNC" id="HGNC:29177"/>
    </source>
</evidence>
<evidence type="ECO:0007744" key="12">
    <source>
    </source>
</evidence>
<evidence type="ECO:0007744" key="13">
    <source>
    </source>
</evidence>
<reference key="1">
    <citation type="submission" date="1998-09" db="EMBL/GenBank/DDBJ databases">
        <title>Human homologue to C. elegans F11A10.4 hypothetical protein.</title>
        <authorList>
            <person name="Inagaki S."/>
        </authorList>
    </citation>
    <scope>NUCLEOTIDE SEQUENCE [MRNA] (ISOFORM 1)</scope>
    <scope>VARIANT THR-548</scope>
    <source>
        <tissue>Hippocampus</tissue>
    </source>
</reference>
<reference key="2">
    <citation type="journal article" date="1999" name="DNA Res.">
        <title>Prediction of the coding sequences of unidentified human genes. XIV. The complete sequences of 100 new cDNA clones from brain which code for large proteins in vitro.</title>
        <authorList>
            <person name="Kikuno R."/>
            <person name="Nagase T."/>
            <person name="Ishikawa K."/>
            <person name="Hirosawa M."/>
            <person name="Miyajima N."/>
            <person name="Tanaka A."/>
            <person name="Kotani H."/>
            <person name="Nomura N."/>
            <person name="Ohara O."/>
        </authorList>
    </citation>
    <scope>NUCLEOTIDE SEQUENCE [LARGE SCALE MRNA] (ISOFORM 1)</scope>
    <source>
        <tissue>Brain</tissue>
    </source>
</reference>
<reference key="3">
    <citation type="journal article" date="2002" name="DNA Res.">
        <title>Construction of expression-ready cDNA clones for KIAA genes: manual curation of 330 KIAA cDNA clones.</title>
        <authorList>
            <person name="Nakajima D."/>
            <person name="Okazaki N."/>
            <person name="Yamakawa H."/>
            <person name="Kikuno R."/>
            <person name="Ohara O."/>
            <person name="Nagase T."/>
        </authorList>
    </citation>
    <scope>SEQUENCE REVISION</scope>
</reference>
<reference key="4">
    <citation type="journal article" date="2004" name="Nat. Genet.">
        <title>Complete sequencing and characterization of 21,243 full-length human cDNAs.</title>
        <authorList>
            <person name="Ota T."/>
            <person name="Suzuki Y."/>
            <person name="Nishikawa T."/>
            <person name="Otsuki T."/>
            <person name="Sugiyama T."/>
            <person name="Irie R."/>
            <person name="Wakamatsu A."/>
            <person name="Hayashi K."/>
            <person name="Sato H."/>
            <person name="Nagai K."/>
            <person name="Kimura K."/>
            <person name="Makita H."/>
            <person name="Sekine M."/>
            <person name="Obayashi M."/>
            <person name="Nishi T."/>
            <person name="Shibahara T."/>
            <person name="Tanaka T."/>
            <person name="Ishii S."/>
            <person name="Yamamoto J."/>
            <person name="Saito K."/>
            <person name="Kawai Y."/>
            <person name="Isono Y."/>
            <person name="Nakamura Y."/>
            <person name="Nagahari K."/>
            <person name="Murakami K."/>
            <person name="Yasuda T."/>
            <person name="Iwayanagi T."/>
            <person name="Wagatsuma M."/>
            <person name="Shiratori A."/>
            <person name="Sudo H."/>
            <person name="Hosoiri T."/>
            <person name="Kaku Y."/>
            <person name="Kodaira H."/>
            <person name="Kondo H."/>
            <person name="Sugawara M."/>
            <person name="Takahashi M."/>
            <person name="Kanda K."/>
            <person name="Yokoi T."/>
            <person name="Furuya T."/>
            <person name="Kikkawa E."/>
            <person name="Omura Y."/>
            <person name="Abe K."/>
            <person name="Kamihara K."/>
            <person name="Katsuta N."/>
            <person name="Sato K."/>
            <person name="Tanikawa M."/>
            <person name="Yamazaki M."/>
            <person name="Ninomiya K."/>
            <person name="Ishibashi T."/>
            <person name="Yamashita H."/>
            <person name="Murakawa K."/>
            <person name="Fujimori K."/>
            <person name="Tanai H."/>
            <person name="Kimata M."/>
            <person name="Watanabe M."/>
            <person name="Hiraoka S."/>
            <person name="Chiba Y."/>
            <person name="Ishida S."/>
            <person name="Ono Y."/>
            <person name="Takiguchi S."/>
            <person name="Watanabe S."/>
            <person name="Yosida M."/>
            <person name="Hotuta T."/>
            <person name="Kusano J."/>
            <person name="Kanehori K."/>
            <person name="Takahashi-Fujii A."/>
            <person name="Hara H."/>
            <person name="Tanase T.-O."/>
            <person name="Nomura Y."/>
            <person name="Togiya S."/>
            <person name="Komai F."/>
            <person name="Hara R."/>
            <person name="Takeuchi K."/>
            <person name="Arita M."/>
            <person name="Imose N."/>
            <person name="Musashino K."/>
            <person name="Yuuki H."/>
            <person name="Oshima A."/>
            <person name="Sasaki N."/>
            <person name="Aotsuka S."/>
            <person name="Yoshikawa Y."/>
            <person name="Matsunawa H."/>
            <person name="Ichihara T."/>
            <person name="Shiohata N."/>
            <person name="Sano S."/>
            <person name="Moriya S."/>
            <person name="Momiyama H."/>
            <person name="Satoh N."/>
            <person name="Takami S."/>
            <person name="Terashima Y."/>
            <person name="Suzuki O."/>
            <person name="Nakagawa S."/>
            <person name="Senoh A."/>
            <person name="Mizoguchi H."/>
            <person name="Goto Y."/>
            <person name="Shimizu F."/>
            <person name="Wakebe H."/>
            <person name="Hishigaki H."/>
            <person name="Watanabe T."/>
            <person name="Sugiyama A."/>
            <person name="Takemoto M."/>
            <person name="Kawakami B."/>
            <person name="Yamazaki M."/>
            <person name="Watanabe K."/>
            <person name="Kumagai A."/>
            <person name="Itakura S."/>
            <person name="Fukuzumi Y."/>
            <person name="Fujimori Y."/>
            <person name="Komiyama M."/>
            <person name="Tashiro H."/>
            <person name="Tanigami A."/>
            <person name="Fujiwara T."/>
            <person name="Ono T."/>
            <person name="Yamada K."/>
            <person name="Fujii Y."/>
            <person name="Ozaki K."/>
            <person name="Hirao M."/>
            <person name="Ohmori Y."/>
            <person name="Kawabata A."/>
            <person name="Hikiji T."/>
            <person name="Kobatake N."/>
            <person name="Inagaki H."/>
            <person name="Ikema Y."/>
            <person name="Okamoto S."/>
            <person name="Okitani R."/>
            <person name="Kawakami T."/>
            <person name="Noguchi S."/>
            <person name="Itoh T."/>
            <person name="Shigeta K."/>
            <person name="Senba T."/>
            <person name="Matsumura K."/>
            <person name="Nakajima Y."/>
            <person name="Mizuno T."/>
            <person name="Morinaga M."/>
            <person name="Sasaki M."/>
            <person name="Togashi T."/>
            <person name="Oyama M."/>
            <person name="Hata H."/>
            <person name="Watanabe M."/>
            <person name="Komatsu T."/>
            <person name="Mizushima-Sugano J."/>
            <person name="Satoh T."/>
            <person name="Shirai Y."/>
            <person name="Takahashi Y."/>
            <person name="Nakagawa K."/>
            <person name="Okumura K."/>
            <person name="Nagase T."/>
            <person name="Nomura N."/>
            <person name="Kikuchi H."/>
            <person name="Masuho Y."/>
            <person name="Yamashita R."/>
            <person name="Nakai K."/>
            <person name="Yada T."/>
            <person name="Nakamura Y."/>
            <person name="Ohara O."/>
            <person name="Isogai T."/>
            <person name="Sugano S."/>
        </authorList>
    </citation>
    <scope>NUCLEOTIDE SEQUENCE [LARGE SCALE MRNA] (ISOFORM 3)</scope>
    <source>
        <tissue>Prostate</tissue>
    </source>
</reference>
<reference key="5">
    <citation type="journal article" date="2007" name="BMC Genomics">
        <title>The full-ORF clone resource of the German cDNA consortium.</title>
        <authorList>
            <person name="Bechtel S."/>
            <person name="Rosenfelder H."/>
            <person name="Duda A."/>
            <person name="Schmidt C.P."/>
            <person name="Ernst U."/>
            <person name="Wellenreuther R."/>
            <person name="Mehrle A."/>
            <person name="Schuster C."/>
            <person name="Bahr A."/>
            <person name="Bloecker H."/>
            <person name="Heubner D."/>
            <person name="Hoerlein A."/>
            <person name="Michel G."/>
            <person name="Wedler H."/>
            <person name="Koehrer K."/>
            <person name="Ottenwaelder B."/>
            <person name="Poustka A."/>
            <person name="Wiemann S."/>
            <person name="Schupp I."/>
        </authorList>
    </citation>
    <scope>NUCLEOTIDE SEQUENCE [LARGE SCALE MRNA] (ISOFORMS 1 AND 2)</scope>
    <scope>VARIANT THR-548</scope>
    <source>
        <tissue>Amygdala</tissue>
        <tissue>Spinal cord</tissue>
    </source>
</reference>
<reference key="6">
    <citation type="journal article" date="2006" name="Nature">
        <title>The finished DNA sequence of human chromosome 12.</title>
        <authorList>
            <person name="Scherer S.E."/>
            <person name="Muzny D.M."/>
            <person name="Buhay C.J."/>
            <person name="Chen R."/>
            <person name="Cree A."/>
            <person name="Ding Y."/>
            <person name="Dugan-Rocha S."/>
            <person name="Gill R."/>
            <person name="Gunaratne P."/>
            <person name="Harris R.A."/>
            <person name="Hawes A.C."/>
            <person name="Hernandez J."/>
            <person name="Hodgson A.V."/>
            <person name="Hume J."/>
            <person name="Jackson A."/>
            <person name="Khan Z.M."/>
            <person name="Kovar-Smith C."/>
            <person name="Lewis L.R."/>
            <person name="Lozado R.J."/>
            <person name="Metzker M.L."/>
            <person name="Milosavljevic A."/>
            <person name="Miner G.R."/>
            <person name="Montgomery K.T."/>
            <person name="Morgan M.B."/>
            <person name="Nazareth L.V."/>
            <person name="Scott G."/>
            <person name="Sodergren E."/>
            <person name="Song X.-Z."/>
            <person name="Steffen D."/>
            <person name="Lovering R.C."/>
            <person name="Wheeler D.A."/>
            <person name="Worley K.C."/>
            <person name="Yuan Y."/>
            <person name="Zhang Z."/>
            <person name="Adams C.Q."/>
            <person name="Ansari-Lari M.A."/>
            <person name="Ayele M."/>
            <person name="Brown M.J."/>
            <person name="Chen G."/>
            <person name="Chen Z."/>
            <person name="Clerc-Blankenburg K.P."/>
            <person name="Davis C."/>
            <person name="Delgado O."/>
            <person name="Dinh H.H."/>
            <person name="Draper H."/>
            <person name="Gonzalez-Garay M.L."/>
            <person name="Havlak P."/>
            <person name="Jackson L.R."/>
            <person name="Jacob L.S."/>
            <person name="Kelly S.H."/>
            <person name="Li L."/>
            <person name="Li Z."/>
            <person name="Liu J."/>
            <person name="Liu W."/>
            <person name="Lu J."/>
            <person name="Maheshwari M."/>
            <person name="Nguyen B.-V."/>
            <person name="Okwuonu G.O."/>
            <person name="Pasternak S."/>
            <person name="Perez L.M."/>
            <person name="Plopper F.J.H."/>
            <person name="Santibanez J."/>
            <person name="Shen H."/>
            <person name="Tabor P.E."/>
            <person name="Verduzco D."/>
            <person name="Waldron L."/>
            <person name="Wang Q."/>
            <person name="Williams G.A."/>
            <person name="Zhang J."/>
            <person name="Zhou J."/>
            <person name="Allen C.C."/>
            <person name="Amin A.G."/>
            <person name="Anyalebechi V."/>
            <person name="Bailey M."/>
            <person name="Barbaria J.A."/>
            <person name="Bimage K.E."/>
            <person name="Bryant N.P."/>
            <person name="Burch P.E."/>
            <person name="Burkett C.E."/>
            <person name="Burrell K.L."/>
            <person name="Calderon E."/>
            <person name="Cardenas V."/>
            <person name="Carter K."/>
            <person name="Casias K."/>
            <person name="Cavazos I."/>
            <person name="Cavazos S.R."/>
            <person name="Ceasar H."/>
            <person name="Chacko J."/>
            <person name="Chan S.N."/>
            <person name="Chavez D."/>
            <person name="Christopoulos C."/>
            <person name="Chu J."/>
            <person name="Cockrell R."/>
            <person name="Cox C.D."/>
            <person name="Dang M."/>
            <person name="Dathorne S.R."/>
            <person name="David R."/>
            <person name="Davis C.M."/>
            <person name="Davy-Carroll L."/>
            <person name="Deshazo D.R."/>
            <person name="Donlin J.E."/>
            <person name="D'Souza L."/>
            <person name="Eaves K.A."/>
            <person name="Egan A."/>
            <person name="Emery-Cohen A.J."/>
            <person name="Escotto M."/>
            <person name="Flagg N."/>
            <person name="Forbes L.D."/>
            <person name="Gabisi A.M."/>
            <person name="Garza M."/>
            <person name="Hamilton C."/>
            <person name="Henderson N."/>
            <person name="Hernandez O."/>
            <person name="Hines S."/>
            <person name="Hogues M.E."/>
            <person name="Huang M."/>
            <person name="Idlebird D.G."/>
            <person name="Johnson R."/>
            <person name="Jolivet A."/>
            <person name="Jones S."/>
            <person name="Kagan R."/>
            <person name="King L.M."/>
            <person name="Leal B."/>
            <person name="Lebow H."/>
            <person name="Lee S."/>
            <person name="LeVan J.M."/>
            <person name="Lewis L.C."/>
            <person name="London P."/>
            <person name="Lorensuhewa L.M."/>
            <person name="Loulseged H."/>
            <person name="Lovett D.A."/>
            <person name="Lucier A."/>
            <person name="Lucier R.L."/>
            <person name="Ma J."/>
            <person name="Madu R.C."/>
            <person name="Mapua P."/>
            <person name="Martindale A.D."/>
            <person name="Martinez E."/>
            <person name="Massey E."/>
            <person name="Mawhiney S."/>
            <person name="Meador M.G."/>
            <person name="Mendez S."/>
            <person name="Mercado C."/>
            <person name="Mercado I.C."/>
            <person name="Merritt C.E."/>
            <person name="Miner Z.L."/>
            <person name="Minja E."/>
            <person name="Mitchell T."/>
            <person name="Mohabbat F."/>
            <person name="Mohabbat K."/>
            <person name="Montgomery B."/>
            <person name="Moore N."/>
            <person name="Morris S."/>
            <person name="Munidasa M."/>
            <person name="Ngo R.N."/>
            <person name="Nguyen N.B."/>
            <person name="Nickerson E."/>
            <person name="Nwaokelemeh O.O."/>
            <person name="Nwokenkwo S."/>
            <person name="Obregon M."/>
            <person name="Oguh M."/>
            <person name="Oragunye N."/>
            <person name="Oviedo R.J."/>
            <person name="Parish B.J."/>
            <person name="Parker D.N."/>
            <person name="Parrish J."/>
            <person name="Parks K.L."/>
            <person name="Paul H.A."/>
            <person name="Payton B.A."/>
            <person name="Perez A."/>
            <person name="Perrin W."/>
            <person name="Pickens A."/>
            <person name="Primus E.L."/>
            <person name="Pu L.-L."/>
            <person name="Puazo M."/>
            <person name="Quiles M.M."/>
            <person name="Quiroz J.B."/>
            <person name="Rabata D."/>
            <person name="Reeves K."/>
            <person name="Ruiz S.J."/>
            <person name="Shao H."/>
            <person name="Sisson I."/>
            <person name="Sonaike T."/>
            <person name="Sorelle R.P."/>
            <person name="Sutton A.E."/>
            <person name="Svatek A.F."/>
            <person name="Svetz L.A."/>
            <person name="Tamerisa K.S."/>
            <person name="Taylor T.R."/>
            <person name="Teague B."/>
            <person name="Thomas N."/>
            <person name="Thorn R.D."/>
            <person name="Trejos Z.Y."/>
            <person name="Trevino B.K."/>
            <person name="Ukegbu O.N."/>
            <person name="Urban J.B."/>
            <person name="Vasquez L.I."/>
            <person name="Vera V.A."/>
            <person name="Villasana D.M."/>
            <person name="Wang L."/>
            <person name="Ward-Moore S."/>
            <person name="Warren J.T."/>
            <person name="Wei X."/>
            <person name="White F."/>
            <person name="Williamson A.L."/>
            <person name="Wleczyk R."/>
            <person name="Wooden H.S."/>
            <person name="Wooden S.H."/>
            <person name="Yen J."/>
            <person name="Yoon L."/>
            <person name="Yoon V."/>
            <person name="Zorrilla S.E."/>
            <person name="Nelson D."/>
            <person name="Kucherlapati R."/>
            <person name="Weinstock G."/>
            <person name="Gibbs R.A."/>
        </authorList>
    </citation>
    <scope>NUCLEOTIDE SEQUENCE [LARGE SCALE GENOMIC DNA]</scope>
</reference>
<reference key="7">
    <citation type="journal article" date="2004" name="Genome Res.">
        <title>The status, quality, and expansion of the NIH full-length cDNA project: the Mammalian Gene Collection (MGC).</title>
        <authorList>
            <consortium name="The MGC Project Team"/>
        </authorList>
    </citation>
    <scope>NUCLEOTIDE SEQUENCE [LARGE SCALE MRNA] (ISOFORM 5)</scope>
    <scope>NUCLEOTIDE SEQUENCE [LARGE SCALE MRNA] OF 1-1071 (ISOFORMS 1/2)</scope>
</reference>
<reference key="8">
    <citation type="journal article" date="2005" name="J. Cell Sci.">
        <title>Yeast Mon2p is a highly conserved protein that functions in the cytoplasm-to-vacuole transport pathway and is required for Golgi homeostasis.</title>
        <authorList>
            <person name="Efe J.A."/>
            <person name="Plattner F."/>
            <person name="Hulo N."/>
            <person name="Kressler D."/>
            <person name="Emr S.D."/>
            <person name="Deloche O."/>
        </authorList>
    </citation>
    <scope>IDENTIFICATION</scope>
</reference>
<reference key="9">
    <citation type="journal article" date="2006" name="J. Biol. Chem.">
        <title>Mon2, a relative of large Arf exchange factors, recruits Dop1 to the Golgi apparatus.</title>
        <authorList>
            <person name="Gillingham A.K."/>
            <person name="Whyte J.R.C."/>
            <person name="Panic B."/>
            <person name="Munro S."/>
        </authorList>
    </citation>
    <scope>IDENTIFICATION</scope>
</reference>
<reference key="10">
    <citation type="journal article" date="2008" name="Mol. Cell">
        <title>Kinase-selective enrichment enables quantitative phosphoproteomics of the kinome across the cell cycle.</title>
        <authorList>
            <person name="Daub H."/>
            <person name="Olsen J.V."/>
            <person name="Bairlein M."/>
            <person name="Gnad F."/>
            <person name="Oppermann F.S."/>
            <person name="Korner R."/>
            <person name="Greff Z."/>
            <person name="Keri G."/>
            <person name="Stemmann O."/>
            <person name="Mann M."/>
        </authorList>
    </citation>
    <scope>IDENTIFICATION BY MASS SPECTROMETRY [LARGE SCALE ANALYSIS]</scope>
    <source>
        <tissue>Cervix carcinoma</tissue>
    </source>
</reference>
<reference key="11">
    <citation type="journal article" date="2008" name="Proc. Natl. Acad. Sci. U.S.A.">
        <title>A quantitative atlas of mitotic phosphorylation.</title>
        <authorList>
            <person name="Dephoure N."/>
            <person name="Zhou C."/>
            <person name="Villen J."/>
            <person name="Beausoleil S.A."/>
            <person name="Bakalarski C.E."/>
            <person name="Elledge S.J."/>
            <person name="Gygi S.P."/>
        </authorList>
    </citation>
    <scope>PHOSPHORYLATION [LARGE SCALE ANALYSIS] AT SER-205</scope>
    <scope>IDENTIFICATION BY MASS SPECTROMETRY [LARGE SCALE ANALYSIS]</scope>
    <source>
        <tissue>Cervix carcinoma</tissue>
    </source>
</reference>
<reference key="12">
    <citation type="journal article" date="2010" name="Sci. Signal.">
        <title>Quantitative phosphoproteomics reveals widespread full phosphorylation site occupancy during mitosis.</title>
        <authorList>
            <person name="Olsen J.V."/>
            <person name="Vermeulen M."/>
            <person name="Santamaria A."/>
            <person name="Kumar C."/>
            <person name="Miller M.L."/>
            <person name="Jensen L.J."/>
            <person name="Gnad F."/>
            <person name="Cox J."/>
            <person name="Jensen T.S."/>
            <person name="Nigg E.A."/>
            <person name="Brunak S."/>
            <person name="Mann M."/>
        </authorList>
    </citation>
    <scope>IDENTIFICATION BY MASS SPECTROMETRY [LARGE SCALE ANALYSIS]</scope>
    <source>
        <tissue>Cervix carcinoma</tissue>
    </source>
</reference>
<reference key="13">
    <citation type="journal article" date="2011" name="BMC Syst. Biol.">
        <title>Initial characterization of the human central proteome.</title>
        <authorList>
            <person name="Burkard T.R."/>
            <person name="Planyavsky M."/>
            <person name="Kaupe I."/>
            <person name="Breitwieser F.P."/>
            <person name="Buerckstuemmer T."/>
            <person name="Bennett K.L."/>
            <person name="Superti-Furga G."/>
            <person name="Colinge J."/>
        </authorList>
    </citation>
    <scope>IDENTIFICATION BY MASS SPECTROMETRY [LARGE SCALE ANALYSIS]</scope>
</reference>
<reference key="14">
    <citation type="journal article" date="2012" name="Proc. Natl. Acad. Sci. U.S.A.">
        <title>N-terminal acetylome analyses and functional insights of the N-terminal acetyltransferase NatB.</title>
        <authorList>
            <person name="Van Damme P."/>
            <person name="Lasa M."/>
            <person name="Polevoda B."/>
            <person name="Gazquez C."/>
            <person name="Elosegui-Artola A."/>
            <person name="Kim D.S."/>
            <person name="De Juan-Pardo E."/>
            <person name="Demeyer K."/>
            <person name="Hole K."/>
            <person name="Larrea E."/>
            <person name="Timmerman E."/>
            <person name="Prieto J."/>
            <person name="Arnesen T."/>
            <person name="Sherman F."/>
            <person name="Gevaert K."/>
            <person name="Aldabe R."/>
        </authorList>
    </citation>
    <scope>ACETYLATION [LARGE SCALE ANALYSIS] AT SER-2</scope>
    <scope>CLEAVAGE OF INITIATOR METHIONINE [LARGE SCALE ANALYSIS]</scope>
    <scope>IDENTIFICATION BY MASS SPECTROMETRY [LARGE SCALE ANALYSIS]</scope>
</reference>
<reference key="15">
    <citation type="journal article" date="2014" name="J. Proteomics">
        <title>An enzyme assisted RP-RPLC approach for in-depth analysis of human liver phosphoproteome.</title>
        <authorList>
            <person name="Bian Y."/>
            <person name="Song C."/>
            <person name="Cheng K."/>
            <person name="Dong M."/>
            <person name="Wang F."/>
            <person name="Huang J."/>
            <person name="Sun D."/>
            <person name="Wang L."/>
            <person name="Ye M."/>
            <person name="Zou H."/>
        </authorList>
    </citation>
    <scope>IDENTIFICATION BY MASS SPECTROMETRY [LARGE SCALE ANALYSIS]</scope>
    <source>
        <tissue>Liver</tissue>
    </source>
</reference>
<reference key="16">
    <citation type="journal article" date="2018" name="Nat. Commun.">
        <title>SNX3-retromer requires an evolutionary conserved MON2:DOPEY2:ATP9A complex to mediate Wntless sorting and Wnt secretion.</title>
        <authorList>
            <person name="McGough I.J."/>
            <person name="de Groot R.E.A."/>
            <person name="Jellett A.P."/>
            <person name="Betist M.C."/>
            <person name="Varandas K.C."/>
            <person name="Danson C.M."/>
            <person name="Heesom K.J."/>
            <person name="Korswagen H.C."/>
            <person name="Cullen P.J."/>
        </authorList>
    </citation>
    <scope>FUNCTION</scope>
    <scope>INTERACTION WITH SNX3; ATP9A AND DOP1B</scope>
    <scope>IDENTIFICATION BY MASS SPECTROMETRY</scope>
    <scope>SUBCELLULAR LOCATION</scope>
</reference>
<feature type="initiator methionine" description="Removed" evidence="13">
    <location>
        <position position="1"/>
    </location>
</feature>
<feature type="chain" id="PRO_0000297902" description="Protein MON2 homolog">
    <location>
        <begin position="2"/>
        <end position="1717"/>
    </location>
</feature>
<feature type="region of interest" description="Disordered" evidence="2">
    <location>
        <begin position="511"/>
        <end position="538"/>
    </location>
</feature>
<feature type="compositionally biased region" description="Polar residues" evidence="2">
    <location>
        <begin position="522"/>
        <end position="538"/>
    </location>
</feature>
<feature type="modified residue" description="N-acetylserine" evidence="13">
    <location>
        <position position="2"/>
    </location>
</feature>
<feature type="modified residue" description="Phosphoserine" evidence="12">
    <location>
        <position position="205"/>
    </location>
</feature>
<feature type="modified residue" description="Phosphoserine" evidence="1">
    <location>
        <position position="537"/>
    </location>
</feature>
<feature type="splice variant" id="VSP_027389" description="In isoform 3." evidence="6">
    <location>
        <begin position="1"/>
        <end position="1125"/>
    </location>
</feature>
<feature type="splice variant" id="VSP_055628" description="In isoform 6." evidence="10">
    <original>GSLPPHYALTVLNTTTAATLSNKS</original>
    <variation>A</variation>
    <location>
        <begin position="611"/>
        <end position="634"/>
    </location>
</feature>
<feature type="splice variant" id="VSP_027390" description="In isoform 3." evidence="6">
    <original>FNTRRYLLQPL</original>
    <variation>MIIVFFSLPNI</variation>
    <location>
        <begin position="1126"/>
        <end position="1136"/>
    </location>
</feature>
<feature type="splice variant" id="VSP_027391" description="In isoform 3, isoform 5 and isoform 6." evidence="6 7">
    <location>
        <begin position="1393"/>
        <end position="1398"/>
    </location>
</feature>
<feature type="splice variant" id="VSP_027392" description="In isoform 2." evidence="8">
    <original>VDGNTWAQVIAL</original>
    <variation>ACISLFGIPPYF</variation>
    <location>
        <begin position="1664"/>
        <end position="1675"/>
    </location>
</feature>
<feature type="splice variant" id="VSP_027393" description="In isoform 2." evidence="8">
    <location>
        <begin position="1676"/>
        <end position="1717"/>
    </location>
</feature>
<feature type="sequence variant" id="VAR_034689" description="In dbSNP:rs10219555." evidence="3 5">
    <original>A</original>
    <variation>T</variation>
    <location>
        <position position="548"/>
    </location>
</feature>
<feature type="sequence conflict" description="In Ref. 5; CAD97657." evidence="10" ref="5">
    <original>N</original>
    <variation>D</variation>
    <location>
        <position position="163"/>
    </location>
</feature>
<feature type="sequence conflict" description="In Ref. 5; CAD97657." evidence="10" ref="5">
    <original>V</original>
    <variation>I</variation>
    <location>
        <position position="197"/>
    </location>
</feature>
<feature type="sequence conflict" description="In Ref. 5; CAD97657." evidence="10" ref="5">
    <original>M</original>
    <variation>T</variation>
    <location>
        <position position="238"/>
    </location>
</feature>
<feature type="sequence conflict" description="In Ref. 5; CAD89933." evidence="10" ref="5">
    <original>S</original>
    <variation>G</variation>
    <location>
        <position position="268"/>
    </location>
</feature>
<feature type="sequence conflict" description="In Ref. 5; CAD97657." evidence="10" ref="5">
    <original>E</original>
    <variation>G</variation>
    <location>
        <position position="650"/>
    </location>
</feature>
<feature type="sequence conflict" description="In Ref. 5; CAD89933." evidence="10" ref="5">
    <original>V</original>
    <variation>A</variation>
    <location>
        <position position="734"/>
    </location>
</feature>
<feature type="sequence conflict" description="In Ref. 2; BAA82992 and 7; AAI41818/AAI42711/AAI51242." evidence="10" ref="2 7">
    <original>E</original>
    <variation>EK</variation>
    <location>
        <position position="822"/>
    </location>
</feature>
<feature type="sequence conflict" description="In Ref. 5; CAD89933." evidence="10" ref="5">
    <original>E</original>
    <variation>K</variation>
    <location>
        <position position="1002"/>
    </location>
</feature>
<proteinExistence type="evidence at protein level"/>
<comment type="function">
    <text evidence="4">Plays a role in regulating membrane trafficking of cargo proteins. Together with ATP9A and DOP1B, regulates SNX3 retromer-mediated endosomal sorting of WLS away from lysosomal degradation.</text>
</comment>
<comment type="subunit">
    <text evidence="4">Homooligomer (PubMed:30213940). Heterotrimer with ATP9A and DOP1B; this interaction is retromer-independent (PubMed:30213940). Interacts with SNX3 (PubMed:30213940).</text>
</comment>
<comment type="interaction">
    <interactant intactId="EBI-358882">
        <id>Q7Z3U7</id>
    </interactant>
    <interactant intactId="EBI-447141">
        <id>Q9UJY5</id>
        <label>GGA1</label>
    </interactant>
    <organismsDiffer>false</organismsDiffer>
    <experiments>2</experiments>
</comment>
<comment type="subcellular location">
    <subcellularLocation>
        <location evidence="4">Early endosome membrane</location>
    </subcellularLocation>
</comment>
<comment type="alternative products">
    <event type="alternative splicing"/>
    <isoform>
        <id>Q7Z3U7-1</id>
        <name>1</name>
        <sequence type="displayed"/>
    </isoform>
    <isoform>
        <id>Q7Z3U7-2</id>
        <name>2</name>
        <sequence type="described" ref="VSP_027392 VSP_027393"/>
    </isoform>
    <isoform>
        <id>Q7Z3U7-3</id>
        <name>3</name>
        <sequence type="described" ref="VSP_027389 VSP_027390 VSP_027391"/>
    </isoform>
    <isoform>
        <id>Q7Z3U7-5</id>
        <name>5</name>
        <sequence type="described" ref="VSP_027391"/>
    </isoform>
    <isoform>
        <id>Q7Z3U7-6</id>
        <name>6</name>
        <sequence type="described" ref="VSP_055628 VSP_027391"/>
    </isoform>
</comment>
<comment type="similarity">
    <text evidence="10">Belongs to the MON2 family.</text>
</comment>
<comment type="sequence caution" evidence="10">
    <conflict type="erroneous initiation">
        <sequence resource="EMBL-CDS" id="BAA82992"/>
    </conflict>
    <text>Extended N-terminus.</text>
</comment>
<gene>
    <name evidence="9 11" type="primary">MON2</name>
    <name type="synonym">KIAA1040</name>
    <name type="synonym">SF21</name>
</gene>
<protein>
    <recommendedName>
        <fullName>Protein MON2 homolog</fullName>
    </recommendedName>
    <alternativeName>
        <fullName>Protein SF21</fullName>
    </alternativeName>
</protein>
<dbReference type="EMBL" id="AB017814">
    <property type="protein sequence ID" value="BAC11707.1"/>
    <property type="molecule type" value="mRNA"/>
</dbReference>
<dbReference type="EMBL" id="AB028963">
    <property type="protein sequence ID" value="BAA82992.3"/>
    <property type="status" value="ALT_INIT"/>
    <property type="molecule type" value="mRNA"/>
</dbReference>
<dbReference type="EMBL" id="AK092646">
    <property type="protein sequence ID" value="BAC03935.1"/>
    <property type="molecule type" value="mRNA"/>
</dbReference>
<dbReference type="EMBL" id="AL834320">
    <property type="protein sequence ID" value="CAD38989.1"/>
    <property type="molecule type" value="mRNA"/>
</dbReference>
<dbReference type="EMBL" id="BX537415">
    <property type="protein sequence ID" value="CAD97657.1"/>
    <property type="molecule type" value="mRNA"/>
</dbReference>
<dbReference type="EMBL" id="AL833066">
    <property type="protein sequence ID" value="CAD89933.1"/>
    <property type="molecule type" value="mRNA"/>
</dbReference>
<dbReference type="EMBL" id="AC026115">
    <property type="status" value="NOT_ANNOTATED_CDS"/>
    <property type="molecule type" value="Genomic_DNA"/>
</dbReference>
<dbReference type="EMBL" id="AC079035">
    <property type="status" value="NOT_ANNOTATED_CDS"/>
    <property type="molecule type" value="Genomic_DNA"/>
</dbReference>
<dbReference type="EMBL" id="BC136621">
    <property type="protein sequence ID" value="AAI36622.1"/>
    <property type="molecule type" value="mRNA"/>
</dbReference>
<dbReference type="EMBL" id="BC141817">
    <property type="protein sequence ID" value="AAI41818.1"/>
    <property type="molecule type" value="mRNA"/>
</dbReference>
<dbReference type="EMBL" id="BC142710">
    <property type="protein sequence ID" value="AAI42711.1"/>
    <property type="molecule type" value="mRNA"/>
</dbReference>
<dbReference type="EMBL" id="BC151241">
    <property type="protein sequence ID" value="AAI51242.1"/>
    <property type="molecule type" value="mRNA"/>
</dbReference>
<dbReference type="CCDS" id="CCDS31849.1">
    <molecule id="Q7Z3U7-1"/>
</dbReference>
<dbReference type="CCDS" id="CCDS61175.1">
    <molecule id="Q7Z3U7-6"/>
</dbReference>
<dbReference type="CCDS" id="CCDS61177.1">
    <molecule id="Q7Z3U7-2"/>
</dbReference>
<dbReference type="CCDS" id="CCDS61178.1">
    <molecule id="Q7Z3U7-5"/>
</dbReference>
<dbReference type="RefSeq" id="NP_001265398.1">
    <molecule id="Q7Z3U7-2"/>
    <property type="nucleotide sequence ID" value="NM_001278469.3"/>
</dbReference>
<dbReference type="RefSeq" id="NP_001265399.1">
    <molecule id="Q7Z3U7-5"/>
    <property type="nucleotide sequence ID" value="NM_001278470.2"/>
</dbReference>
<dbReference type="RefSeq" id="NP_001265400.1">
    <molecule id="Q7Z3U7-6"/>
    <property type="nucleotide sequence ID" value="NM_001278471.2"/>
</dbReference>
<dbReference type="RefSeq" id="NP_055841.2">
    <molecule id="Q7Z3U7-1"/>
    <property type="nucleotide sequence ID" value="NM_015026.3"/>
</dbReference>
<dbReference type="RefSeq" id="XP_016874530.1">
    <property type="nucleotide sequence ID" value="XM_017019041.1"/>
</dbReference>
<dbReference type="SMR" id="Q7Z3U7"/>
<dbReference type="BioGRID" id="116680">
    <property type="interactions" value="200"/>
</dbReference>
<dbReference type="CORUM" id="Q7Z3U7"/>
<dbReference type="FunCoup" id="Q7Z3U7">
    <property type="interactions" value="2268"/>
</dbReference>
<dbReference type="IntAct" id="Q7Z3U7">
    <property type="interactions" value="82"/>
</dbReference>
<dbReference type="MINT" id="Q7Z3U7"/>
<dbReference type="STRING" id="9606.ENSP00000377250"/>
<dbReference type="ChEMBL" id="CHEMBL4105804"/>
<dbReference type="GlyGen" id="Q7Z3U7">
    <property type="glycosylation" value="1 site, 1 O-linked glycan (1 site)"/>
</dbReference>
<dbReference type="iPTMnet" id="Q7Z3U7"/>
<dbReference type="PhosphoSitePlus" id="Q7Z3U7"/>
<dbReference type="SwissPalm" id="Q7Z3U7"/>
<dbReference type="BioMuta" id="MON2"/>
<dbReference type="DMDM" id="156632594"/>
<dbReference type="jPOST" id="Q7Z3U7"/>
<dbReference type="MassIVE" id="Q7Z3U7"/>
<dbReference type="PaxDb" id="9606-ENSP00000377250"/>
<dbReference type="PeptideAtlas" id="Q7Z3U7"/>
<dbReference type="ProteomicsDB" id="28957"/>
<dbReference type="ProteomicsDB" id="29715"/>
<dbReference type="ProteomicsDB" id="69085">
    <molecule id="Q7Z3U7-1"/>
</dbReference>
<dbReference type="ProteomicsDB" id="69086">
    <molecule id="Q7Z3U7-2"/>
</dbReference>
<dbReference type="ProteomicsDB" id="69087">
    <molecule id="Q7Z3U7-3"/>
</dbReference>
<dbReference type="ProteomicsDB" id="7528"/>
<dbReference type="Pumba" id="Q7Z3U7"/>
<dbReference type="Antibodypedia" id="51455">
    <property type="antibodies" value="26 antibodies from 12 providers"/>
</dbReference>
<dbReference type="DNASU" id="23041"/>
<dbReference type="Ensembl" id="ENST00000393629.6">
    <molecule id="Q7Z3U7-5"/>
    <property type="protein sequence ID" value="ENSP00000377249.2"/>
    <property type="gene ID" value="ENSG00000061987.16"/>
</dbReference>
<dbReference type="Ensembl" id="ENST00000393630.8">
    <molecule id="Q7Z3U7-1"/>
    <property type="protein sequence ID" value="ENSP00000377250.4"/>
    <property type="gene ID" value="ENSG00000061987.16"/>
</dbReference>
<dbReference type="Ensembl" id="ENST00000546600.5">
    <molecule id="Q7Z3U7-2"/>
    <property type="protein sequence ID" value="ENSP00000447407.1"/>
    <property type="gene ID" value="ENSG00000061987.16"/>
</dbReference>
<dbReference type="Ensembl" id="ENST00000552738.5">
    <molecule id="Q7Z3U7-6"/>
    <property type="protein sequence ID" value="ENSP00000449215.1"/>
    <property type="gene ID" value="ENSG00000061987.16"/>
</dbReference>
<dbReference type="GeneID" id="23041"/>
<dbReference type="KEGG" id="hsa:23041"/>
<dbReference type="MANE-Select" id="ENST00000393630.8">
    <property type="protein sequence ID" value="ENSP00000377250.4"/>
    <property type="RefSeq nucleotide sequence ID" value="NM_015026.3"/>
    <property type="RefSeq protein sequence ID" value="NP_055841.2"/>
</dbReference>
<dbReference type="UCSC" id="uc001sre.4">
    <molecule id="Q7Z3U7-1"/>
    <property type="organism name" value="human"/>
</dbReference>
<dbReference type="AGR" id="HGNC:29177"/>
<dbReference type="CTD" id="23041"/>
<dbReference type="DisGeNET" id="23041"/>
<dbReference type="GeneCards" id="MON2"/>
<dbReference type="HGNC" id="HGNC:29177">
    <property type="gene designation" value="MON2"/>
</dbReference>
<dbReference type="HPA" id="ENSG00000061987">
    <property type="expression patterns" value="Low tissue specificity"/>
</dbReference>
<dbReference type="neXtProt" id="NX_Q7Z3U7"/>
<dbReference type="OpenTargets" id="ENSG00000061987"/>
<dbReference type="PharmGKB" id="PA143485545"/>
<dbReference type="VEuPathDB" id="HostDB:ENSG00000061987"/>
<dbReference type="eggNOG" id="KOG0929">
    <property type="taxonomic scope" value="Eukaryota"/>
</dbReference>
<dbReference type="eggNOG" id="KOG1848">
    <property type="taxonomic scope" value="Eukaryota"/>
</dbReference>
<dbReference type="GeneTree" id="ENSGT00390000013286"/>
<dbReference type="HOGENOM" id="CLU_001169_2_0_1"/>
<dbReference type="InParanoid" id="Q7Z3U7"/>
<dbReference type="OrthoDB" id="294853at2759"/>
<dbReference type="PAN-GO" id="Q7Z3U7">
    <property type="GO annotations" value="0 GO annotations based on evolutionary models"/>
</dbReference>
<dbReference type="TreeFam" id="TF314287"/>
<dbReference type="PathwayCommons" id="Q7Z3U7"/>
<dbReference type="SignaLink" id="Q7Z3U7"/>
<dbReference type="BioGRID-ORCS" id="23041">
    <property type="hits" value="73 hits in 1148 CRISPR screens"/>
</dbReference>
<dbReference type="ChiTaRS" id="MON2">
    <property type="organism name" value="human"/>
</dbReference>
<dbReference type="GeneWiki" id="MON2"/>
<dbReference type="GenomeRNAi" id="23041"/>
<dbReference type="Pharos" id="Q7Z3U7">
    <property type="development level" value="Tbio"/>
</dbReference>
<dbReference type="PRO" id="PR:Q7Z3U7"/>
<dbReference type="Proteomes" id="UP000005640">
    <property type="component" value="Chromosome 12"/>
</dbReference>
<dbReference type="RNAct" id="Q7Z3U7">
    <property type="molecule type" value="protein"/>
</dbReference>
<dbReference type="Bgee" id="ENSG00000061987">
    <property type="expression patterns" value="Expressed in body of pancreas and 205 other cell types or tissues"/>
</dbReference>
<dbReference type="ExpressionAtlas" id="Q7Z3U7">
    <property type="expression patterns" value="baseline and differential"/>
</dbReference>
<dbReference type="GO" id="GO:0005829">
    <property type="term" value="C:cytosol"/>
    <property type="evidence" value="ECO:0007669"/>
    <property type="project" value="GOC"/>
</dbReference>
<dbReference type="GO" id="GO:0031901">
    <property type="term" value="C:early endosome membrane"/>
    <property type="evidence" value="ECO:0000314"/>
    <property type="project" value="UniProtKB"/>
</dbReference>
<dbReference type="GO" id="GO:0070062">
    <property type="term" value="C:extracellular exosome"/>
    <property type="evidence" value="ECO:0007005"/>
    <property type="project" value="UniProtKB"/>
</dbReference>
<dbReference type="GO" id="GO:0006895">
    <property type="term" value="P:Golgi to endosome transport"/>
    <property type="evidence" value="ECO:0000250"/>
    <property type="project" value="HGNC-UCL"/>
</dbReference>
<dbReference type="GO" id="GO:0015031">
    <property type="term" value="P:protein transport"/>
    <property type="evidence" value="ECO:0007669"/>
    <property type="project" value="UniProtKB-KW"/>
</dbReference>
<dbReference type="InterPro" id="IPR016024">
    <property type="entry name" value="ARM-type_fold"/>
</dbReference>
<dbReference type="InterPro" id="IPR032629">
    <property type="entry name" value="DCB_dom"/>
</dbReference>
<dbReference type="InterPro" id="IPR015403">
    <property type="entry name" value="Mon2/Sec7/BIG1-like_HDS"/>
</dbReference>
<dbReference type="InterPro" id="IPR032691">
    <property type="entry name" value="Mon2/Sec7/BIG1-like_HUS"/>
</dbReference>
<dbReference type="InterPro" id="IPR032817">
    <property type="entry name" value="Mon2_C"/>
</dbReference>
<dbReference type="PANTHER" id="PTHR10663">
    <property type="entry name" value="GUANYL-NUCLEOTIDE EXCHANGE FACTOR"/>
    <property type="match status" value="1"/>
</dbReference>
<dbReference type="PANTHER" id="PTHR10663:SF333">
    <property type="entry name" value="PROTEIN MON2 HOMOLOG"/>
    <property type="match status" value="1"/>
</dbReference>
<dbReference type="Pfam" id="PF16213">
    <property type="entry name" value="DCB"/>
    <property type="match status" value="1"/>
</dbReference>
<dbReference type="Pfam" id="PF16206">
    <property type="entry name" value="Mon2_C"/>
    <property type="match status" value="1"/>
</dbReference>
<dbReference type="Pfam" id="PF09324">
    <property type="entry name" value="Sec7-like_HDS"/>
    <property type="match status" value="1"/>
</dbReference>
<dbReference type="Pfam" id="PF12783">
    <property type="entry name" value="Sec7-like_HUS"/>
    <property type="match status" value="1"/>
</dbReference>
<dbReference type="SUPFAM" id="SSF48371">
    <property type="entry name" value="ARM repeat"/>
    <property type="match status" value="2"/>
</dbReference>
<sequence>MSGTSSPEAVKKLLENMQSDLRALSLECKKKFPPVKEAAESGIIKVKTIAARNTEILAALKENSSEVVQPFLMGCGTKEPKITQLCLAAIQRLMSHEVVSETAAGNIINMLWQLMENSLEELKLLQTVLVLLTTNTVVHDEALSKAIVLCFRLHFTKDNITNNTAAATVRQVVTVVFERMVAEDERHRDIIEQPVLVQGNSNRRSVSTLKPCAKDAYMLFQDLCQLVNADAPYWLVGMTEMTRTFGLELLESVLNDFPQVFLQHQEFSFLLKERVCPLVIKLFSPNIKFRQGSSTSSSPAPVEKPYFPICMRLLRVVSVLIKQFYSLLVTECEIFLSLLVKFLDADKPQWLRAVAVESIHRFCVQPQLLRSFCQSYDMKQHSTKVFRDIVNALGSFIQSLFLVPPTGNPATSNQAGNNNLGGSVSAPANSGMVGIGGGVTLLPAFEYRGTWIPILTITVQGSAKATYLEMLDKVEPPTIPEGYAMSVAFHCLLDLVRGITSMIEGELGELETECQTTTEEGSSPTQSTEQQDLQSTSDQMDKEIVSRAVWEEMVNACWCGLLAALSLLLDASTDEAATENILKAELTMAALCGRLGLVTSRDAFITAICKGSLPPHYALTVLNTTTAATLSNKSYSVQGQSVMMISPSSESHQQVVAVGQPLAVQPQGTVMLTSKNIQCMRTLLNLAHCHGAVLGTSWQLVLATLQHLVWILGLKPSSGGALKPGRAVEGPSTVLTTAVMTDLPVISNILSRLFESSQYLDDVSLHHLINALCSLSLEAMDMAYGNNKEPSLFAVAKLLETGLVNMHRIEILWRPLTGHLLEVCQHPNSRMREWGAEALTSLIKAGLTFNHDPPLSQNQRLQLLLLNPLKEMSNINHPDIRLKQLECVLQILQSQGDSLGPGWPLVLGVMGAIRNDQGESLIRTAFQCLQLVVTDFLPTMPCTCLQIVVDVAGSFGLHNQELNISLTSIGLLWNISDYFFQRGETIEKELNKEEAAQQKQAEEKGVVLNRPFHPAPPFDCLWLCLYAKLGELCVDPRPAVRKSAGQTLFSTIGAHGTLLQHSTWHTVIWKVLFHLLDRVRESSTTADKEKIESGGGNILIHHSRDTAEKQWAETWVLTLAGVARIFNTRRYLLQPLGDFSRAWDVLLDHIQSAALSKNNEVSLAALKSFQEILQIVSPVRDSDKPETPPVVNVPVPVLIGPISGMSRPFVRTDSIGEKLGRYSSSEPPIVTDELEDLNLWWAAWNTWYRIGSESTKPPITFDKLTFIPSQPFLTALIQIFPALYQHIKTGFNMDDLQKLGVILHSAISVPISSDASPFILPSYTEAVLTSLQEAVLTALDVLQKAICVGPENMQIMYPAIFDQLLAFVEFSCKPPQYGQLETKHIANAKYNQIQLFAPAEWVALNYVPFAERSLEVVVDLYQKTACHKAVVNEKVLQNIIKTLRVPLSLKYSCPSESTWKLAVSSLLRVLSIGLPVARQHASSGKFDSMWPELANTFEDFLFTKSIPPDNLSIQEFQRNENIDVEVVQLISNEILPYANFIPKEFVGQIMTMLNKGSIHSQSSSFTEAEIDIRLREEFSKMCFETLLQFSFSNKVTTPQEGYISRMALSVLLKRSQDVLHRYIEDERLSGKCPLPRQQVTEIIFVLKAVSTLIDSLKKTQPENVDGNTWAQVIALYPTLVECITCSSSEVCSALKEALVPFKDFMQPPASRVQNGES</sequence>
<accession>Q7Z3U7</accession>
<accession>A5D8U7</accession>
<accession>A7E2Y0</accession>
<accession>B9EGP5</accession>
<accession>F8VWA6</accession>
<accession>F8W1Z6</accession>
<accession>Q86TA2</accession>
<accession>Q8N3I5</accession>
<accession>Q8NAI0</accession>
<accession>Q8NHE2</accession>
<accession>Q9UPW1</accession>